<proteinExistence type="evidence at protein level"/>
<sequence length="174" mass="19962">MIEAQVGKRYAEAIYGIAEANNKVKELYDSLNIVMELYKGDKEFKNLVDHPLVKKEEKKEFINKVFSEFEKFSLDILCYLVEKNRLSYIRGVVAEYLKIYYTKNRIVDVEATFAIEPSEKQKAKLIEKLEKKTGKKVNLVIKINKAIIAGGIIKIGDEIIDGSVRRQLDTVARG</sequence>
<keyword id="KW-0066">ATP synthesis</keyword>
<keyword id="KW-0997">Cell inner membrane</keyword>
<keyword id="KW-1003">Cell membrane</keyword>
<keyword id="KW-0139">CF(1)</keyword>
<keyword id="KW-0903">Direct protein sequencing</keyword>
<keyword id="KW-0375">Hydrogen ion transport</keyword>
<keyword id="KW-0406">Ion transport</keyword>
<keyword id="KW-0472">Membrane</keyword>
<keyword id="KW-0915">Sodium</keyword>
<keyword id="KW-0739">Sodium transport</keyword>
<keyword id="KW-0813">Transport</keyword>
<name>ATPD_ILYTA</name>
<dbReference type="EMBL" id="AF522463">
    <property type="protein sequence ID" value="AAM94910.1"/>
    <property type="molecule type" value="Genomic_DNA"/>
</dbReference>
<dbReference type="SMR" id="Q8KRV1"/>
<dbReference type="GO" id="GO:0005886">
    <property type="term" value="C:plasma membrane"/>
    <property type="evidence" value="ECO:0007669"/>
    <property type="project" value="UniProtKB-SubCell"/>
</dbReference>
<dbReference type="GO" id="GO:0045259">
    <property type="term" value="C:proton-transporting ATP synthase complex"/>
    <property type="evidence" value="ECO:0007669"/>
    <property type="project" value="UniProtKB-KW"/>
</dbReference>
<dbReference type="GO" id="GO:0046933">
    <property type="term" value="F:proton-transporting ATP synthase activity, rotational mechanism"/>
    <property type="evidence" value="ECO:0007669"/>
    <property type="project" value="UniProtKB-UniRule"/>
</dbReference>
<dbReference type="GO" id="GO:0006814">
    <property type="term" value="P:sodium ion transport"/>
    <property type="evidence" value="ECO:0007669"/>
    <property type="project" value="UniProtKB-KW"/>
</dbReference>
<dbReference type="Gene3D" id="1.10.520.20">
    <property type="entry name" value="N-terminal domain of the delta subunit of the F1F0-ATP synthase"/>
    <property type="match status" value="1"/>
</dbReference>
<dbReference type="HAMAP" id="MF_01416">
    <property type="entry name" value="ATP_synth_delta_bact"/>
    <property type="match status" value="1"/>
</dbReference>
<dbReference type="InterPro" id="IPR026015">
    <property type="entry name" value="ATP_synth_OSCP/delta_N_sf"/>
</dbReference>
<dbReference type="InterPro" id="IPR020781">
    <property type="entry name" value="ATPase_OSCP/d_CS"/>
</dbReference>
<dbReference type="InterPro" id="IPR000711">
    <property type="entry name" value="ATPase_OSCP/dsu"/>
</dbReference>
<dbReference type="NCBIfam" id="TIGR01145">
    <property type="entry name" value="ATP_synt_delta"/>
    <property type="match status" value="1"/>
</dbReference>
<dbReference type="PANTHER" id="PTHR11910">
    <property type="entry name" value="ATP SYNTHASE DELTA CHAIN"/>
    <property type="match status" value="1"/>
</dbReference>
<dbReference type="Pfam" id="PF00213">
    <property type="entry name" value="OSCP"/>
    <property type="match status" value="1"/>
</dbReference>
<dbReference type="PRINTS" id="PR00125">
    <property type="entry name" value="ATPASEDELTA"/>
</dbReference>
<dbReference type="SUPFAM" id="SSF47928">
    <property type="entry name" value="N-terminal domain of the delta subunit of the F1F0-ATP synthase"/>
    <property type="match status" value="1"/>
</dbReference>
<dbReference type="PROSITE" id="PS00389">
    <property type="entry name" value="ATPASE_DELTA"/>
    <property type="match status" value="1"/>
</dbReference>
<gene>
    <name evidence="1" type="primary">atpH</name>
</gene>
<accession>Q8KRV1</accession>
<reference key="1">
    <citation type="journal article" date="2003" name="Biochim. Biophys. Acta">
        <title>Complete DNA sequence of the atp operon of the sodium-dependent F1Fo ATP synthase from Ilyobacter tartaricus and identification of the encoded subunits.</title>
        <authorList>
            <person name="Meier T."/>
            <person name="von Ballmoos C."/>
            <person name="Neumann S."/>
            <person name="Kaim G."/>
        </authorList>
    </citation>
    <scope>NUCLEOTIDE SEQUENCE [GENOMIC DNA]</scope>
    <scope>PROTEIN SEQUENCE OF 1-30</scope>
    <source>
        <strain>ATCC 35898 / DSM 2382 / GraTa2</strain>
    </source>
</reference>
<protein>
    <recommendedName>
        <fullName evidence="1">ATP synthase subunit delta, sodium ion specific</fullName>
    </recommendedName>
    <alternativeName>
        <fullName evidence="1">ATP synthase F(1) sector subunit delta</fullName>
    </alternativeName>
    <alternativeName>
        <fullName evidence="1">F-type ATPase subunit delta</fullName>
        <shortName evidence="1">F-ATPase subunit delta</shortName>
    </alternativeName>
</protein>
<feature type="chain" id="PRO_0000371001" description="ATP synthase subunit delta, sodium ion specific">
    <location>
        <begin position="1"/>
        <end position="174"/>
    </location>
</feature>
<comment type="function">
    <text evidence="1">F(1)F(0) ATP synthase produces ATP from ADP in the presence of a proton or sodium gradient. F-type ATPases consist of two structural domains, F(1) containing the extramembraneous catalytic core and F(0) containing the membrane proton channel, linked together by a central stalk and a peripheral stalk. During catalysis, ATP synthesis in the catalytic domain of F(1) is coupled via a rotary mechanism of the central stalk subunits to proton translocation.</text>
</comment>
<comment type="function">
    <text evidence="1">This protein is part of the stalk that links CF(0) to CF(1). It either transmits conformational changes from CF(0) to CF(1) or is implicated in proton conduction.</text>
</comment>
<comment type="subunit">
    <text evidence="1">F-type ATPases have 2 components, F(1) - the catalytic core - and F(0) - the membrane proton channel. F(1) has five subunits: alpha(3), beta(3), gamma(1), delta(1), epsilon(1). F(0) has three main subunits: a(1), b(2) and c(10-14). The alpha and beta chains form an alternating ring which encloses part of the gamma chain. F(1) is attached to F(0) by a central stalk formed by the gamma and epsilon chains, while a peripheral stalk is formed by the delta and b chains.</text>
</comment>
<comment type="subcellular location">
    <subcellularLocation>
        <location evidence="1">Cell inner membrane</location>
        <topology evidence="1">Peripheral membrane protein</topology>
    </subcellularLocation>
</comment>
<comment type="miscellaneous">
    <text>The ATPase of I.tartaricus is of special interest because it uses sodium ions instead of protons as the physiological coupling ion.</text>
</comment>
<comment type="similarity">
    <text evidence="1">Belongs to the ATPase delta chain family.</text>
</comment>
<evidence type="ECO:0000255" key="1">
    <source>
        <dbReference type="HAMAP-Rule" id="MF_01416"/>
    </source>
</evidence>
<organism>
    <name type="scientific">Ilyobacter tartaricus</name>
    <dbReference type="NCBI Taxonomy" id="167644"/>
    <lineage>
        <taxon>Bacteria</taxon>
        <taxon>Fusobacteriati</taxon>
        <taxon>Fusobacteriota</taxon>
        <taxon>Fusobacteriia</taxon>
        <taxon>Fusobacteriales</taxon>
        <taxon>Fusobacteriaceae</taxon>
        <taxon>Ilyobacter</taxon>
    </lineage>
</organism>